<accession>A0QW28</accession>
<evidence type="ECO:0000255" key="1"/>
<evidence type="ECO:0000269" key="2">
    <source>
    </source>
</evidence>
<evidence type="ECO:0000305" key="3"/>
<organism>
    <name type="scientific">Mycolicibacterium smegmatis (strain ATCC 700084 / mc(2)155)</name>
    <name type="common">Mycobacterium smegmatis</name>
    <dbReference type="NCBI Taxonomy" id="246196"/>
    <lineage>
        <taxon>Bacteria</taxon>
        <taxon>Bacillati</taxon>
        <taxon>Actinomycetota</taxon>
        <taxon>Actinomycetes</taxon>
        <taxon>Mycobacteriales</taxon>
        <taxon>Mycobacteriaceae</taxon>
        <taxon>Mycolicibacterium</taxon>
    </lineage>
</organism>
<name>AFTC_MYCS2</name>
<comment type="function">
    <text evidence="2">Involved in the biosynthesis of the arabinogalactan (AG) region of the mycolylarabinogalactan-peptidoglycan (mAGP) complex, an essential component of the mycobacterial cell wall. Catalyzes the addition of an arabinofuranosyl (Araf) residue from the sugar donor beta-D-arabinofuranosyl-1-monophosphoryldecaprenol (DPA) on the C-3 of an alpha-(1-&gt;5)-linked Araf from the arabinan backbone of AG.</text>
</comment>
<comment type="catalytic activity">
    <reaction evidence="2">
        <text>Adds an alpha-D-arabinofuranosyl group from trans,octacis-decaprenylphospho-beta-D-arabinofuranose at the 3-O-position of an alpha-(1-&gt;5)-arabinofuranan chain attached to a beta-(1-&gt;5)-galactofuranan chain.</text>
        <dbReference type="EC" id="2.4.2.47"/>
    </reaction>
</comment>
<comment type="pathway">
    <text>Cell wall biogenesis; cell wall polysaccharide biosynthesis.</text>
</comment>
<comment type="subcellular location">
    <subcellularLocation>
        <location evidence="1">Cell membrane</location>
        <topology evidence="1">Multi-pass membrane protein</topology>
    </subcellularLocation>
</comment>
<comment type="disruption phenotype">
    <text evidence="2">Cells lacking this gene result in colonies with a more erose appearance compared with the usual glossy appearance. The mutant yields arabinogalactan (AG) with a significant reduction in arabinofuranosyl (Araf) content concomitant with a relative increase in the amount of galactanfuranosyl (Galf). It shows only a slightly reduced growth rate.</text>
</comment>
<comment type="similarity">
    <text evidence="3">Belongs to the glycosyltransferase 87 family.</text>
</comment>
<keyword id="KW-1003">Cell membrane</keyword>
<keyword id="KW-0961">Cell wall biogenesis/degradation</keyword>
<keyword id="KW-0328">Glycosyltransferase</keyword>
<keyword id="KW-0472">Membrane</keyword>
<keyword id="KW-1185">Reference proteome</keyword>
<keyword id="KW-0808">Transferase</keyword>
<keyword id="KW-0812">Transmembrane</keyword>
<keyword id="KW-1133">Transmembrane helix</keyword>
<dbReference type="EC" id="2.4.2.47"/>
<dbReference type="EMBL" id="CP000480">
    <property type="protein sequence ID" value="ABK72123.1"/>
    <property type="molecule type" value="Genomic_DNA"/>
</dbReference>
<dbReference type="EMBL" id="CP001663">
    <property type="protein sequence ID" value="AFP39184.1"/>
    <property type="molecule type" value="Genomic_DNA"/>
</dbReference>
<dbReference type="RefSeq" id="YP_887116.1">
    <property type="nucleotide sequence ID" value="NC_008596.1"/>
</dbReference>
<dbReference type="STRING" id="246196.MSMEG_2785"/>
<dbReference type="PaxDb" id="246196-MSMEI_2716"/>
<dbReference type="KEGG" id="msb:LJ00_13845"/>
<dbReference type="KEGG" id="msg:MSMEI_2716"/>
<dbReference type="KEGG" id="msm:MSMEG_2785"/>
<dbReference type="PATRIC" id="fig|246196.19.peg.2753"/>
<dbReference type="eggNOG" id="ENOG5033U55">
    <property type="taxonomic scope" value="Bacteria"/>
</dbReference>
<dbReference type="OrthoDB" id="5175994at2"/>
<dbReference type="UniPathway" id="UPA00963"/>
<dbReference type="Proteomes" id="UP000000757">
    <property type="component" value="Chromosome"/>
</dbReference>
<dbReference type="Proteomes" id="UP000006158">
    <property type="component" value="Chromosome"/>
</dbReference>
<dbReference type="GO" id="GO:0005886">
    <property type="term" value="C:plasma membrane"/>
    <property type="evidence" value="ECO:0007669"/>
    <property type="project" value="UniProtKB-SubCell"/>
</dbReference>
<dbReference type="GO" id="GO:0016758">
    <property type="term" value="F:hexosyltransferase activity"/>
    <property type="evidence" value="ECO:0007669"/>
    <property type="project" value="InterPro"/>
</dbReference>
<dbReference type="GO" id="GO:0045227">
    <property type="term" value="P:capsule polysaccharide biosynthetic process"/>
    <property type="evidence" value="ECO:0007669"/>
    <property type="project" value="UniProtKB-UniPathway"/>
</dbReference>
<dbReference type="GO" id="GO:0071555">
    <property type="term" value="P:cell wall organization"/>
    <property type="evidence" value="ECO:0007669"/>
    <property type="project" value="UniProtKB-KW"/>
</dbReference>
<dbReference type="InterPro" id="IPR018584">
    <property type="entry name" value="GT87"/>
</dbReference>
<dbReference type="Pfam" id="PF09594">
    <property type="entry name" value="GT87"/>
    <property type="match status" value="1"/>
</dbReference>
<gene>
    <name type="primary">aftC</name>
    <name type="ordered locus">MSMEG_2785</name>
    <name type="ordered locus">MSMEI_2716</name>
</gene>
<feature type="chain" id="PRO_0000420580" description="Alpha-(1-&gt;3)-arabinofuranosyltransferase">
    <location>
        <begin position="1"/>
        <end position="430"/>
    </location>
</feature>
<feature type="transmembrane region" description="Helical" evidence="1">
    <location>
        <begin position="26"/>
        <end position="46"/>
    </location>
</feature>
<feature type="transmembrane region" description="Helical" evidence="1">
    <location>
        <begin position="114"/>
        <end position="134"/>
    </location>
</feature>
<feature type="transmembrane region" description="Helical" evidence="1">
    <location>
        <begin position="136"/>
        <end position="156"/>
    </location>
</feature>
<feature type="transmembrane region" description="Helical" evidence="1">
    <location>
        <begin position="160"/>
        <end position="180"/>
    </location>
</feature>
<feature type="transmembrane region" description="Helical" evidence="1">
    <location>
        <begin position="194"/>
        <end position="214"/>
    </location>
</feature>
<feature type="transmembrane region" description="Helical" evidence="1">
    <location>
        <begin position="218"/>
        <end position="238"/>
    </location>
</feature>
<feature type="transmembrane region" description="Helical" evidence="1">
    <location>
        <begin position="276"/>
        <end position="296"/>
    </location>
</feature>
<feature type="transmembrane region" description="Helical" evidence="1">
    <location>
        <begin position="307"/>
        <end position="327"/>
    </location>
</feature>
<feature type="transmembrane region" description="Helical" evidence="1">
    <location>
        <begin position="352"/>
        <end position="372"/>
    </location>
</feature>
<feature type="transmembrane region" description="Helical" evidence="1">
    <location>
        <begin position="381"/>
        <end position="401"/>
    </location>
</feature>
<protein>
    <recommendedName>
        <fullName>Alpha-(1-&gt;3)-arabinofuranosyltransferase</fullName>
        <ecNumber>2.4.2.47</ecNumber>
    </recommendedName>
    <alternativeName>
        <fullName>Arabinofuranan 3-O-arabinosyltransferase</fullName>
    </alternativeName>
    <alternativeName>
        <fullName>Arabinofuranosyltransferase C</fullName>
    </alternativeName>
</protein>
<proteinExistence type="evidence at protein level"/>
<sequence>MYCALVTATDSITTKLLNAFRPRTSAPSTATVLRSVLWPIAILSVIHRSYVLGTNGYITDDFGPVYRAVINFKLGLDIYNEQFDHVDPHYLYPPGGTLLLAPFGYLPVDASRYWYISFNVLAFLIAAYLMLRIFDYTLSSVAAPALVLAMFCTESVTNTLVFTNINGCMLLGAVLFFRWLLKGGRNAELLAGAAIGLTLVVKPSLAPLLLLPVLNRQFYTLITAFGVPLVFNIAAWPLVPDPMNFVRHTVPYIMSTRDYFNSSIVGNGIYYGLPMWLILLLRVVFLLLAVGSLWLLYRYYRERDPRFWLLTSSGVLLTASFLLLSLGQGYYSTMLFPFLMTVVLPNSVLRNWPAWLAIYGFMTMDRWLLGHWPTTGRFLEYMKITYGWSLMLVVVFCVLYFRYLDAKQDGRLDQGIDPPWMARERTPAPV</sequence>
<reference key="1">
    <citation type="submission" date="2006-10" db="EMBL/GenBank/DDBJ databases">
        <authorList>
            <person name="Fleischmann R.D."/>
            <person name="Dodson R.J."/>
            <person name="Haft D.H."/>
            <person name="Merkel J.S."/>
            <person name="Nelson W.C."/>
            <person name="Fraser C.M."/>
        </authorList>
    </citation>
    <scope>NUCLEOTIDE SEQUENCE [LARGE SCALE GENOMIC DNA]</scope>
    <source>
        <strain>ATCC 700084 / mc(2)155</strain>
    </source>
</reference>
<reference key="2">
    <citation type="journal article" date="2007" name="Genome Biol.">
        <title>Interrupted coding sequences in Mycobacterium smegmatis: authentic mutations or sequencing errors?</title>
        <authorList>
            <person name="Deshayes C."/>
            <person name="Perrodou E."/>
            <person name="Gallien S."/>
            <person name="Euphrasie D."/>
            <person name="Schaeffer C."/>
            <person name="Van-Dorsselaer A."/>
            <person name="Poch O."/>
            <person name="Lecompte O."/>
            <person name="Reyrat J.-M."/>
        </authorList>
    </citation>
    <scope>NUCLEOTIDE SEQUENCE [LARGE SCALE GENOMIC DNA]</scope>
    <source>
        <strain>ATCC 700084 / mc(2)155</strain>
    </source>
</reference>
<reference key="3">
    <citation type="journal article" date="2009" name="Genome Res.">
        <title>Ortho-proteogenomics: multiple proteomes investigation through orthology and a new MS-based protocol.</title>
        <authorList>
            <person name="Gallien S."/>
            <person name="Perrodou E."/>
            <person name="Carapito C."/>
            <person name="Deshayes C."/>
            <person name="Reyrat J.-M."/>
            <person name="Van Dorsselaer A."/>
            <person name="Poch O."/>
            <person name="Schaeffer C."/>
            <person name="Lecompte O."/>
        </authorList>
    </citation>
    <scope>NUCLEOTIDE SEQUENCE [LARGE SCALE GENOMIC DNA]</scope>
    <source>
        <strain>ATCC 700084 / mc(2)155</strain>
    </source>
</reference>
<reference key="4">
    <citation type="journal article" date="2008" name="Mol. Microbiol.">
        <title>Biosynthesis of mycobacterial arabinogalactan: identification of a novel alpha(1--&gt;3) arabinofuranosyltransferase.</title>
        <authorList>
            <person name="Birch H.L."/>
            <person name="Alderwick L.J."/>
            <person name="Bhatt A."/>
            <person name="Rittmann D."/>
            <person name="Krumbach K."/>
            <person name="Singh A."/>
            <person name="Bai Y."/>
            <person name="Lowary T.L."/>
            <person name="Eggeling L."/>
            <person name="Besra G.S."/>
        </authorList>
    </citation>
    <scope>FUNCTION</scope>
    <scope>CATALYTIC ACTIVITY</scope>
    <scope>DISRUPTION PHENOTYPE</scope>
    <scope>NOMENCLATURE</scope>
</reference>